<accession>Q8WNR9</accession>
<organism>
    <name type="scientific">Felis catus</name>
    <name type="common">Cat</name>
    <name type="synonym">Felis silvestris catus</name>
    <dbReference type="NCBI Taxonomy" id="9685"/>
    <lineage>
        <taxon>Eukaryota</taxon>
        <taxon>Metazoa</taxon>
        <taxon>Chordata</taxon>
        <taxon>Craniata</taxon>
        <taxon>Vertebrata</taxon>
        <taxon>Euteleostomi</taxon>
        <taxon>Mammalia</taxon>
        <taxon>Eutheria</taxon>
        <taxon>Laurasiatheria</taxon>
        <taxon>Carnivora</taxon>
        <taxon>Feliformia</taxon>
        <taxon>Felidae</taxon>
        <taxon>Felinae</taxon>
        <taxon>Felis</taxon>
    </lineage>
</organism>
<feature type="chain" id="PRO_0000207127" description="Cystatin-A">
    <location>
        <begin position="1"/>
        <end position="98"/>
    </location>
</feature>
<feature type="short sequence motif" description="Secondary area of contact">
    <location>
        <begin position="46"/>
        <end position="50"/>
    </location>
</feature>
<feature type="site" description="Reactive site" evidence="1">
    <location>
        <position position="4"/>
    </location>
</feature>
<feature type="modified residue" description="N-acetylmethionine" evidence="2">
    <location>
        <position position="1"/>
    </location>
</feature>
<gene>
    <name type="primary">CSTA</name>
</gene>
<reference key="1">
    <citation type="journal article" date="2001" name="Clin. Exp. Allergy">
        <title>Molecular cloning, expression and modelling of cat allergen, cystatin (Fel d 3), a cysteine protease inhibitor.</title>
        <authorList>
            <person name="Ichikawa K."/>
            <person name="Vailes L.D."/>
            <person name="Pomes A."/>
            <person name="Chapman M.D."/>
        </authorList>
    </citation>
    <scope>NUCLEOTIDE SEQUENCE [MRNA]</scope>
    <scope>ALLERGEN</scope>
    <source>
        <tissue>Skin</tissue>
    </source>
</reference>
<evidence type="ECO:0000250" key="1"/>
<evidence type="ECO:0000250" key="2">
    <source>
        <dbReference type="UniProtKB" id="P01039"/>
    </source>
</evidence>
<evidence type="ECO:0000269" key="3">
    <source>
    </source>
</evidence>
<evidence type="ECO:0000305" key="4"/>
<sequence>MIPGGLSEAKPATPEIQEIANEVKPQLEEKTNETYQKFEAIEYKTQVVAGINYYIKVQVDDNRYIHIKVFKGLPVQDSSLTLTGYQTGKSEDDELTGF</sequence>
<protein>
    <recommendedName>
        <fullName>Cystatin-A</fullName>
    </recommendedName>
    <allergenName>Fel d 3</allergenName>
</protein>
<dbReference type="EMBL" id="AF238996">
    <property type="protein sequence ID" value="AAL49391.1"/>
    <property type="molecule type" value="mRNA"/>
</dbReference>
<dbReference type="RefSeq" id="NP_001009864.1">
    <property type="nucleotide sequence ID" value="NM_001009864.1"/>
</dbReference>
<dbReference type="SMR" id="Q8WNR9"/>
<dbReference type="FunCoup" id="Q8WNR9">
    <property type="interactions" value="2"/>
</dbReference>
<dbReference type="STRING" id="9685.ENSFCAP00000008082"/>
<dbReference type="Allergome" id="3280">
    <property type="allergen name" value="Fel d 3.0101"/>
</dbReference>
<dbReference type="Allergome" id="347">
    <property type="allergen name" value="Fel d 3"/>
</dbReference>
<dbReference type="MEROPS" id="I25.001"/>
<dbReference type="PaxDb" id="9685-ENSFCAP00000008082"/>
<dbReference type="GeneID" id="493942"/>
<dbReference type="KEGG" id="fca:493942"/>
<dbReference type="CTD" id="1475"/>
<dbReference type="eggNOG" id="ENOG502SF2X">
    <property type="taxonomic scope" value="Eukaryota"/>
</dbReference>
<dbReference type="InParanoid" id="Q8WNR9"/>
<dbReference type="OrthoDB" id="2429551at2759"/>
<dbReference type="Proteomes" id="UP000011712">
    <property type="component" value="Unplaced"/>
</dbReference>
<dbReference type="GO" id="GO:0001533">
    <property type="term" value="C:cornified envelope"/>
    <property type="evidence" value="ECO:0007669"/>
    <property type="project" value="Ensembl"/>
</dbReference>
<dbReference type="GO" id="GO:0005829">
    <property type="term" value="C:cytosol"/>
    <property type="evidence" value="ECO:0000318"/>
    <property type="project" value="GO_Central"/>
</dbReference>
<dbReference type="GO" id="GO:0005615">
    <property type="term" value="C:extracellular space"/>
    <property type="evidence" value="ECO:0007669"/>
    <property type="project" value="Ensembl"/>
</dbReference>
<dbReference type="GO" id="GO:0005654">
    <property type="term" value="C:nucleoplasm"/>
    <property type="evidence" value="ECO:0007669"/>
    <property type="project" value="Ensembl"/>
</dbReference>
<dbReference type="GO" id="GO:1904090">
    <property type="term" value="C:peptidase inhibitor complex"/>
    <property type="evidence" value="ECO:0007669"/>
    <property type="project" value="Ensembl"/>
</dbReference>
<dbReference type="GO" id="GO:0004869">
    <property type="term" value="F:cysteine-type endopeptidase inhibitor activity"/>
    <property type="evidence" value="ECO:0000318"/>
    <property type="project" value="GO_Central"/>
</dbReference>
<dbReference type="GO" id="GO:0002020">
    <property type="term" value="F:protease binding"/>
    <property type="evidence" value="ECO:0007669"/>
    <property type="project" value="Ensembl"/>
</dbReference>
<dbReference type="GO" id="GO:0098609">
    <property type="term" value="P:cell-cell adhesion"/>
    <property type="evidence" value="ECO:0007669"/>
    <property type="project" value="Ensembl"/>
</dbReference>
<dbReference type="GO" id="GO:0030216">
    <property type="term" value="P:keratinocyte differentiation"/>
    <property type="evidence" value="ECO:0007669"/>
    <property type="project" value="Ensembl"/>
</dbReference>
<dbReference type="GO" id="GO:0045861">
    <property type="term" value="P:negative regulation of proteolysis"/>
    <property type="evidence" value="ECO:0007669"/>
    <property type="project" value="Ensembl"/>
</dbReference>
<dbReference type="CDD" id="cd00042">
    <property type="entry name" value="CY"/>
    <property type="match status" value="1"/>
</dbReference>
<dbReference type="FunFam" id="3.10.450.10:FF:000001">
    <property type="entry name" value="Cystatin-A"/>
    <property type="match status" value="1"/>
</dbReference>
<dbReference type="Gene3D" id="3.10.450.10">
    <property type="match status" value="1"/>
</dbReference>
<dbReference type="InterPro" id="IPR000010">
    <property type="entry name" value="Cystatin_dom"/>
</dbReference>
<dbReference type="InterPro" id="IPR046350">
    <property type="entry name" value="Cystatin_sf"/>
</dbReference>
<dbReference type="InterPro" id="IPR018073">
    <property type="entry name" value="Prot_inh_cystat_CS"/>
</dbReference>
<dbReference type="InterPro" id="IPR001713">
    <property type="entry name" value="Prot_inh_stefin"/>
</dbReference>
<dbReference type="PANTHER" id="PTHR11414">
    <property type="entry name" value="CYSTATIN FAMILY MEMBER"/>
    <property type="match status" value="1"/>
</dbReference>
<dbReference type="PANTHER" id="PTHR11414:SF20">
    <property type="entry name" value="CYSTATIN-A"/>
    <property type="match status" value="1"/>
</dbReference>
<dbReference type="Pfam" id="PF00031">
    <property type="entry name" value="Cystatin"/>
    <property type="match status" value="1"/>
</dbReference>
<dbReference type="PRINTS" id="PR00295">
    <property type="entry name" value="STEFINA"/>
</dbReference>
<dbReference type="SMART" id="SM00043">
    <property type="entry name" value="CY"/>
    <property type="match status" value="1"/>
</dbReference>
<dbReference type="SUPFAM" id="SSF54403">
    <property type="entry name" value="Cystatin/monellin"/>
    <property type="match status" value="1"/>
</dbReference>
<dbReference type="PROSITE" id="PS00287">
    <property type="entry name" value="CYSTATIN"/>
    <property type="match status" value="1"/>
</dbReference>
<keyword id="KW-0007">Acetylation</keyword>
<keyword id="KW-0020">Allergen</keyword>
<keyword id="KW-0963">Cytoplasm</keyword>
<keyword id="KW-0646">Protease inhibitor</keyword>
<keyword id="KW-1185">Reference proteome</keyword>
<keyword id="KW-0789">Thiol protease inhibitor</keyword>
<proteinExistence type="evidence at protein level"/>
<name>CYTA_FELCA</name>
<comment type="function">
    <text evidence="1">This is an intracellular thiol proteinase inhibitor.</text>
</comment>
<comment type="subcellular location">
    <subcellularLocation>
        <location evidence="1">Cytoplasm</location>
    </subcellularLocation>
</comment>
<comment type="allergen">
    <text evidence="3">Causes an allergic reaction in human. Binds to IgE.</text>
</comment>
<comment type="similarity">
    <text evidence="4">Belongs to the cystatin family.</text>
</comment>